<evidence type="ECO:0000255" key="1">
    <source>
        <dbReference type="HAMAP-Rule" id="MF_00454"/>
    </source>
</evidence>
<reference key="1">
    <citation type="submission" date="2007-07" db="EMBL/GenBank/DDBJ databases">
        <title>Complete sequence of chromosome of Shewanella baltica OS185.</title>
        <authorList>
            <consortium name="US DOE Joint Genome Institute"/>
            <person name="Copeland A."/>
            <person name="Lucas S."/>
            <person name="Lapidus A."/>
            <person name="Barry K."/>
            <person name="Glavina del Rio T."/>
            <person name="Dalin E."/>
            <person name="Tice H."/>
            <person name="Pitluck S."/>
            <person name="Sims D."/>
            <person name="Brettin T."/>
            <person name="Bruce D."/>
            <person name="Detter J.C."/>
            <person name="Han C."/>
            <person name="Schmutz J."/>
            <person name="Larimer F."/>
            <person name="Land M."/>
            <person name="Hauser L."/>
            <person name="Kyrpides N."/>
            <person name="Mikhailova N."/>
            <person name="Brettar I."/>
            <person name="Rodrigues J."/>
            <person name="Konstantinidis K."/>
            <person name="Tiedje J."/>
            <person name="Richardson P."/>
        </authorList>
    </citation>
    <scope>NUCLEOTIDE SEQUENCE [LARGE SCALE GENOMIC DNA]</scope>
    <source>
        <strain>OS185</strain>
    </source>
</reference>
<sequence length="124" mass="13450">MNNLLLVALGGSIGAVFRYLISIFMIQVFGSSFPFGTLLVNVLGSFLMGVIYALGQMSHISPELKALIGIGLLGALTTFSTFSNETLLLLQEGDWLKATLNVVLNLSLCLFMVYLGQQLVFSRI</sequence>
<comment type="function">
    <text evidence="1">Fluoride-specific ion channel. Important for reducing fluoride concentration in the cell, thus reducing its toxicity.</text>
</comment>
<comment type="catalytic activity">
    <reaction evidence="1">
        <text>fluoride(in) = fluoride(out)</text>
        <dbReference type="Rhea" id="RHEA:76159"/>
        <dbReference type="ChEBI" id="CHEBI:17051"/>
    </reaction>
    <physiologicalReaction direction="left-to-right" evidence="1">
        <dbReference type="Rhea" id="RHEA:76160"/>
    </physiologicalReaction>
</comment>
<comment type="activity regulation">
    <text evidence="1">Na(+) is not transported, but it plays an essential structural role and its presence is essential for fluoride channel function.</text>
</comment>
<comment type="subcellular location">
    <subcellularLocation>
        <location evidence="1">Cell inner membrane</location>
        <topology evidence="1">Multi-pass membrane protein</topology>
    </subcellularLocation>
</comment>
<comment type="similarity">
    <text evidence="1">Belongs to the fluoride channel Fluc/FEX (TC 1.A.43) family.</text>
</comment>
<proteinExistence type="inferred from homology"/>
<name>FLUC_SHEB8</name>
<keyword id="KW-0997">Cell inner membrane</keyword>
<keyword id="KW-1003">Cell membrane</keyword>
<keyword id="KW-0407">Ion channel</keyword>
<keyword id="KW-0406">Ion transport</keyword>
<keyword id="KW-0472">Membrane</keyword>
<keyword id="KW-0479">Metal-binding</keyword>
<keyword id="KW-0915">Sodium</keyword>
<keyword id="KW-0812">Transmembrane</keyword>
<keyword id="KW-1133">Transmembrane helix</keyword>
<keyword id="KW-0813">Transport</keyword>
<feature type="chain" id="PRO_1000026414" description="Fluoride-specific ion channel FluC">
    <location>
        <begin position="1"/>
        <end position="124"/>
    </location>
</feature>
<feature type="transmembrane region" description="Helical" evidence="1">
    <location>
        <begin position="4"/>
        <end position="24"/>
    </location>
</feature>
<feature type="transmembrane region" description="Helical" evidence="1">
    <location>
        <begin position="35"/>
        <end position="55"/>
    </location>
</feature>
<feature type="transmembrane region" description="Helical" evidence="1">
    <location>
        <begin position="60"/>
        <end position="80"/>
    </location>
</feature>
<feature type="transmembrane region" description="Helical" evidence="1">
    <location>
        <begin position="102"/>
        <end position="122"/>
    </location>
</feature>
<feature type="binding site" evidence="1">
    <location>
        <position position="74"/>
    </location>
    <ligand>
        <name>Na(+)</name>
        <dbReference type="ChEBI" id="CHEBI:29101"/>
        <note>structural</note>
    </ligand>
</feature>
<feature type="binding site" evidence="1">
    <location>
        <position position="77"/>
    </location>
    <ligand>
        <name>Na(+)</name>
        <dbReference type="ChEBI" id="CHEBI:29101"/>
        <note>structural</note>
    </ligand>
</feature>
<accession>A6WNG2</accession>
<organism>
    <name type="scientific">Shewanella baltica (strain OS185)</name>
    <dbReference type="NCBI Taxonomy" id="402882"/>
    <lineage>
        <taxon>Bacteria</taxon>
        <taxon>Pseudomonadati</taxon>
        <taxon>Pseudomonadota</taxon>
        <taxon>Gammaproteobacteria</taxon>
        <taxon>Alteromonadales</taxon>
        <taxon>Shewanellaceae</taxon>
        <taxon>Shewanella</taxon>
    </lineage>
</organism>
<protein>
    <recommendedName>
        <fullName evidence="1">Fluoride-specific ion channel FluC</fullName>
    </recommendedName>
</protein>
<dbReference type="EMBL" id="CP000753">
    <property type="protein sequence ID" value="ABS08351.1"/>
    <property type="molecule type" value="Genomic_DNA"/>
</dbReference>
<dbReference type="RefSeq" id="WP_006081645.1">
    <property type="nucleotide sequence ID" value="NC_009665.1"/>
</dbReference>
<dbReference type="SMR" id="A6WNG2"/>
<dbReference type="GeneID" id="11772448"/>
<dbReference type="KEGG" id="sbm:Shew185_2212"/>
<dbReference type="HOGENOM" id="CLU_114342_3_0_6"/>
<dbReference type="GO" id="GO:0005886">
    <property type="term" value="C:plasma membrane"/>
    <property type="evidence" value="ECO:0007669"/>
    <property type="project" value="UniProtKB-SubCell"/>
</dbReference>
<dbReference type="GO" id="GO:0062054">
    <property type="term" value="F:fluoride channel activity"/>
    <property type="evidence" value="ECO:0007669"/>
    <property type="project" value="UniProtKB-UniRule"/>
</dbReference>
<dbReference type="GO" id="GO:0046872">
    <property type="term" value="F:metal ion binding"/>
    <property type="evidence" value="ECO:0007669"/>
    <property type="project" value="UniProtKB-KW"/>
</dbReference>
<dbReference type="GO" id="GO:0140114">
    <property type="term" value="P:cellular detoxification of fluoride"/>
    <property type="evidence" value="ECO:0007669"/>
    <property type="project" value="UniProtKB-UniRule"/>
</dbReference>
<dbReference type="HAMAP" id="MF_00454">
    <property type="entry name" value="FluC"/>
    <property type="match status" value="1"/>
</dbReference>
<dbReference type="InterPro" id="IPR003691">
    <property type="entry name" value="FluC"/>
</dbReference>
<dbReference type="NCBIfam" id="TIGR00494">
    <property type="entry name" value="crcB"/>
    <property type="match status" value="1"/>
</dbReference>
<dbReference type="PANTHER" id="PTHR28259">
    <property type="entry name" value="FLUORIDE EXPORT PROTEIN 1-RELATED"/>
    <property type="match status" value="1"/>
</dbReference>
<dbReference type="PANTHER" id="PTHR28259:SF1">
    <property type="entry name" value="FLUORIDE EXPORT PROTEIN 1-RELATED"/>
    <property type="match status" value="1"/>
</dbReference>
<dbReference type="Pfam" id="PF02537">
    <property type="entry name" value="CRCB"/>
    <property type="match status" value="1"/>
</dbReference>
<gene>
    <name evidence="1" type="primary">fluC</name>
    <name evidence="1" type="synonym">crcB</name>
    <name type="ordered locus">Shew185_2212</name>
</gene>